<dbReference type="EC" id="2.3.1.35" evidence="1"/>
<dbReference type="EC" id="2.3.1.1" evidence="1"/>
<dbReference type="EMBL" id="CP000046">
    <property type="protein sequence ID" value="AAW37464.1"/>
    <property type="molecule type" value="Genomic_DNA"/>
</dbReference>
<dbReference type="RefSeq" id="WP_000682611.1">
    <property type="nucleotide sequence ID" value="NZ_JBGOFO010000001.1"/>
</dbReference>
<dbReference type="SMR" id="Q5HJJ0"/>
<dbReference type="MEROPS" id="T05.002"/>
<dbReference type="KEGG" id="sac:SACOL0168"/>
<dbReference type="HOGENOM" id="CLU_027172_1_0_9"/>
<dbReference type="UniPathway" id="UPA00068">
    <property type="reaction ID" value="UER00106"/>
</dbReference>
<dbReference type="UniPathway" id="UPA00068">
    <property type="reaction ID" value="UER00111"/>
</dbReference>
<dbReference type="Proteomes" id="UP000000530">
    <property type="component" value="Chromosome"/>
</dbReference>
<dbReference type="GO" id="GO:0005737">
    <property type="term" value="C:cytoplasm"/>
    <property type="evidence" value="ECO:0007669"/>
    <property type="project" value="UniProtKB-SubCell"/>
</dbReference>
<dbReference type="GO" id="GO:0004358">
    <property type="term" value="F:glutamate N-acetyltransferase activity"/>
    <property type="evidence" value="ECO:0007669"/>
    <property type="project" value="UniProtKB-UniRule"/>
</dbReference>
<dbReference type="GO" id="GO:0004042">
    <property type="term" value="F:L-glutamate N-acetyltransferase activity"/>
    <property type="evidence" value="ECO:0007669"/>
    <property type="project" value="UniProtKB-UniRule"/>
</dbReference>
<dbReference type="GO" id="GO:0006526">
    <property type="term" value="P:L-arginine biosynthetic process"/>
    <property type="evidence" value="ECO:0007669"/>
    <property type="project" value="UniProtKB-UniRule"/>
</dbReference>
<dbReference type="GO" id="GO:0006592">
    <property type="term" value="P:ornithine biosynthetic process"/>
    <property type="evidence" value="ECO:0007669"/>
    <property type="project" value="TreeGrafter"/>
</dbReference>
<dbReference type="CDD" id="cd02152">
    <property type="entry name" value="OAT"/>
    <property type="match status" value="1"/>
</dbReference>
<dbReference type="FunFam" id="3.10.20.340:FF:000001">
    <property type="entry name" value="Arginine biosynthesis bifunctional protein ArgJ, chloroplastic"/>
    <property type="match status" value="1"/>
</dbReference>
<dbReference type="FunFam" id="3.60.70.12:FF:000001">
    <property type="entry name" value="Arginine biosynthesis bifunctional protein ArgJ, chloroplastic"/>
    <property type="match status" value="1"/>
</dbReference>
<dbReference type="FunFam" id="3.30.2330.10:FF:000001">
    <property type="entry name" value="Arginine biosynthesis bifunctional protein ArgJ, mitochondrial"/>
    <property type="match status" value="1"/>
</dbReference>
<dbReference type="Gene3D" id="3.30.2330.10">
    <property type="entry name" value="arginine biosynthesis bifunctional protein suprefamily"/>
    <property type="match status" value="1"/>
</dbReference>
<dbReference type="Gene3D" id="3.10.20.340">
    <property type="entry name" value="ArgJ beta chain, C-terminal domain"/>
    <property type="match status" value="1"/>
</dbReference>
<dbReference type="Gene3D" id="3.60.70.12">
    <property type="entry name" value="L-amino peptidase D-ALA esterase/amidase"/>
    <property type="match status" value="1"/>
</dbReference>
<dbReference type="HAMAP" id="MF_01106">
    <property type="entry name" value="ArgJ"/>
    <property type="match status" value="1"/>
</dbReference>
<dbReference type="InterPro" id="IPR002813">
    <property type="entry name" value="Arg_biosynth_ArgJ"/>
</dbReference>
<dbReference type="InterPro" id="IPR016117">
    <property type="entry name" value="ArgJ-like_dom_sf"/>
</dbReference>
<dbReference type="InterPro" id="IPR042195">
    <property type="entry name" value="ArgJ_beta_C"/>
</dbReference>
<dbReference type="NCBIfam" id="TIGR00120">
    <property type="entry name" value="ArgJ"/>
    <property type="match status" value="1"/>
</dbReference>
<dbReference type="NCBIfam" id="NF003802">
    <property type="entry name" value="PRK05388.1"/>
    <property type="match status" value="1"/>
</dbReference>
<dbReference type="PANTHER" id="PTHR23100">
    <property type="entry name" value="ARGININE BIOSYNTHESIS BIFUNCTIONAL PROTEIN ARGJ"/>
    <property type="match status" value="1"/>
</dbReference>
<dbReference type="PANTHER" id="PTHR23100:SF0">
    <property type="entry name" value="ARGININE BIOSYNTHESIS BIFUNCTIONAL PROTEIN ARGJ, MITOCHONDRIAL"/>
    <property type="match status" value="1"/>
</dbReference>
<dbReference type="Pfam" id="PF01960">
    <property type="entry name" value="ArgJ"/>
    <property type="match status" value="1"/>
</dbReference>
<dbReference type="SUPFAM" id="SSF56266">
    <property type="entry name" value="DmpA/ArgJ-like"/>
    <property type="match status" value="1"/>
</dbReference>
<comment type="function">
    <text evidence="1">Catalyzes two activities which are involved in the cyclic version of arginine biosynthesis: the synthesis of N-acetylglutamate from glutamate and acetyl-CoA as the acetyl donor, and of ornithine by transacetylation between N(2)-acetylornithine and glutamate.</text>
</comment>
<comment type="catalytic activity">
    <reaction evidence="1">
        <text>N(2)-acetyl-L-ornithine + L-glutamate = N-acetyl-L-glutamate + L-ornithine</text>
        <dbReference type="Rhea" id="RHEA:15349"/>
        <dbReference type="ChEBI" id="CHEBI:29985"/>
        <dbReference type="ChEBI" id="CHEBI:44337"/>
        <dbReference type="ChEBI" id="CHEBI:46911"/>
        <dbReference type="ChEBI" id="CHEBI:57805"/>
        <dbReference type="EC" id="2.3.1.35"/>
    </reaction>
</comment>
<comment type="catalytic activity">
    <reaction evidence="1">
        <text>L-glutamate + acetyl-CoA = N-acetyl-L-glutamate + CoA + H(+)</text>
        <dbReference type="Rhea" id="RHEA:24292"/>
        <dbReference type="ChEBI" id="CHEBI:15378"/>
        <dbReference type="ChEBI" id="CHEBI:29985"/>
        <dbReference type="ChEBI" id="CHEBI:44337"/>
        <dbReference type="ChEBI" id="CHEBI:57287"/>
        <dbReference type="ChEBI" id="CHEBI:57288"/>
        <dbReference type="EC" id="2.3.1.1"/>
    </reaction>
</comment>
<comment type="pathway">
    <text evidence="1">Amino-acid biosynthesis; L-arginine biosynthesis; L-ornithine and N-acetyl-L-glutamate from L-glutamate and N(2)-acetyl-L-ornithine (cyclic): step 1/1.</text>
</comment>
<comment type="pathway">
    <text evidence="1">Amino-acid biosynthesis; L-arginine biosynthesis; N(2)-acetyl-L-ornithine from L-glutamate: step 1/4.</text>
</comment>
<comment type="subunit">
    <text evidence="1">Heterotetramer of two alpha and two beta chains.</text>
</comment>
<comment type="subcellular location">
    <subcellularLocation>
        <location evidence="1">Cytoplasm</location>
    </subcellularLocation>
</comment>
<comment type="similarity">
    <text evidence="1">Belongs to the ArgJ family.</text>
</comment>
<protein>
    <recommendedName>
        <fullName evidence="1">Arginine biosynthesis bifunctional protein ArgJ</fullName>
    </recommendedName>
    <domain>
        <recommendedName>
            <fullName evidence="1">Glutamate N-acetyltransferase</fullName>
            <ecNumber evidence="1">2.3.1.35</ecNumber>
        </recommendedName>
        <alternativeName>
            <fullName evidence="1">Ornithine acetyltransferase</fullName>
            <shortName evidence="1">OATase</shortName>
        </alternativeName>
        <alternativeName>
            <fullName evidence="1">Ornithine transacetylase</fullName>
        </alternativeName>
    </domain>
    <domain>
        <recommendedName>
            <fullName evidence="1">Amino-acid acetyltransferase</fullName>
            <ecNumber evidence="1">2.3.1.1</ecNumber>
        </recommendedName>
        <alternativeName>
            <fullName evidence="1">N-acetylglutamate synthase</fullName>
            <shortName evidence="1">AGSase</shortName>
        </alternativeName>
    </domain>
    <component>
        <recommendedName>
            <fullName evidence="1">Arginine biosynthesis bifunctional protein ArgJ alpha chain</fullName>
        </recommendedName>
    </component>
    <component>
        <recommendedName>
            <fullName evidence="1">Arginine biosynthesis bifunctional protein ArgJ beta chain</fullName>
        </recommendedName>
    </component>
</protein>
<keyword id="KW-0012">Acyltransferase</keyword>
<keyword id="KW-0028">Amino-acid biosynthesis</keyword>
<keyword id="KW-0055">Arginine biosynthesis</keyword>
<keyword id="KW-0068">Autocatalytic cleavage</keyword>
<keyword id="KW-0963">Cytoplasm</keyword>
<keyword id="KW-0511">Multifunctional enzyme</keyword>
<keyword id="KW-0808">Transferase</keyword>
<reference key="1">
    <citation type="journal article" date="2005" name="J. Bacteriol.">
        <title>Insights on evolution of virulence and resistance from the complete genome analysis of an early methicillin-resistant Staphylococcus aureus strain and a biofilm-producing methicillin-resistant Staphylococcus epidermidis strain.</title>
        <authorList>
            <person name="Gill S.R."/>
            <person name="Fouts D.E."/>
            <person name="Archer G.L."/>
            <person name="Mongodin E.F."/>
            <person name="DeBoy R.T."/>
            <person name="Ravel J."/>
            <person name="Paulsen I.T."/>
            <person name="Kolonay J.F."/>
            <person name="Brinkac L.M."/>
            <person name="Beanan M.J."/>
            <person name="Dodson R.J."/>
            <person name="Daugherty S.C."/>
            <person name="Madupu R."/>
            <person name="Angiuoli S.V."/>
            <person name="Durkin A.S."/>
            <person name="Haft D.H."/>
            <person name="Vamathevan J.J."/>
            <person name="Khouri H."/>
            <person name="Utterback T.R."/>
            <person name="Lee C."/>
            <person name="Dimitrov G."/>
            <person name="Jiang L."/>
            <person name="Qin H."/>
            <person name="Weidman J."/>
            <person name="Tran K."/>
            <person name="Kang K.H."/>
            <person name="Hance I.R."/>
            <person name="Nelson K.E."/>
            <person name="Fraser C.M."/>
        </authorList>
    </citation>
    <scope>NUCLEOTIDE SEQUENCE [LARGE SCALE GENOMIC DNA]</scope>
    <source>
        <strain>COL</strain>
    </source>
</reference>
<evidence type="ECO:0000255" key="1">
    <source>
        <dbReference type="HAMAP-Rule" id="MF_01106"/>
    </source>
</evidence>
<proteinExistence type="inferred from homology"/>
<name>ARGJ_STAAC</name>
<organism>
    <name type="scientific">Staphylococcus aureus (strain COL)</name>
    <dbReference type="NCBI Taxonomy" id="93062"/>
    <lineage>
        <taxon>Bacteria</taxon>
        <taxon>Bacillati</taxon>
        <taxon>Bacillota</taxon>
        <taxon>Bacilli</taxon>
        <taxon>Bacillales</taxon>
        <taxon>Staphylococcaceae</taxon>
        <taxon>Staphylococcus</taxon>
    </lineage>
</organism>
<accession>Q5HJJ0</accession>
<feature type="chain" id="PRO_0000042890" description="Arginine biosynthesis bifunctional protein ArgJ alpha chain" evidence="1">
    <location>
        <begin position="1"/>
        <end position="199"/>
    </location>
</feature>
<feature type="chain" id="PRO_0000042891" description="Arginine biosynthesis bifunctional protein ArgJ beta chain" evidence="1">
    <location>
        <begin position="200"/>
        <end position="413"/>
    </location>
</feature>
<feature type="active site" description="Nucleophile" evidence="1">
    <location>
        <position position="200"/>
    </location>
</feature>
<feature type="binding site" evidence="1">
    <location>
        <position position="163"/>
    </location>
    <ligand>
        <name>substrate</name>
    </ligand>
</feature>
<feature type="binding site" evidence="1">
    <location>
        <position position="189"/>
    </location>
    <ligand>
        <name>substrate</name>
    </ligand>
</feature>
<feature type="binding site" evidence="1">
    <location>
        <position position="200"/>
    </location>
    <ligand>
        <name>substrate</name>
    </ligand>
</feature>
<feature type="binding site" evidence="1">
    <location>
        <position position="286"/>
    </location>
    <ligand>
        <name>substrate</name>
    </ligand>
</feature>
<feature type="binding site" evidence="1">
    <location>
        <position position="408"/>
    </location>
    <ligand>
        <name>substrate</name>
    </ligand>
</feature>
<feature type="binding site" evidence="1">
    <location>
        <position position="413"/>
    </location>
    <ligand>
        <name>substrate</name>
    </ligand>
</feature>
<feature type="site" description="Involved in the stabilization of negative charge on the oxyanion by the formation of the oxyanion hole" evidence="1">
    <location>
        <position position="127"/>
    </location>
</feature>
<feature type="site" description="Involved in the stabilization of negative charge on the oxyanion by the formation of the oxyanion hole" evidence="1">
    <location>
        <position position="128"/>
    </location>
</feature>
<feature type="site" description="Cleavage; by autolysis" evidence="1">
    <location>
        <begin position="199"/>
        <end position="200"/>
    </location>
</feature>
<sequence>MKHQETTSQQYNFSIIKHGDISTPQGFTAGGMHIGLRANKKDFGWIYSSSLASAAAVYTLNQFKAAPLIVTEDTLQKSKGKLQALVVNSANANSCTGQQGIDDARQTQTWVAQQLQIPSEHVAVASTGVIGEYLPMDKIKTGTEHIKDANFATPGAFNEAILTTDTCTKHIAVSLKIDGKTVTIGGSTKGSGMIHPNMATMLAFITTDASIESNTLHQLLKSSTDHTFNMITVDGDTSTNDMVLVMANHQVEHQILSQDHPQWETFVDAFNFVCTFLAKAIARDGEGATKLISVNVSGAKSISDARKIGKTIVSSNLVKSAIFGEDANFGRIITAIGYSGCEIDPNCTYVQLNQIPVVDKGMAVLFDEQAMSNTLTHENVTIDVQLGLGNAAATAYGCDLSYDYVRINASYRT</sequence>
<gene>
    <name evidence="1" type="primary">argJ</name>
    <name type="ordered locus">SACOL0168</name>
</gene>